<name>PROA_BART1</name>
<proteinExistence type="inferred from homology"/>
<comment type="function">
    <text evidence="1">Catalyzes the NADPH-dependent reduction of L-glutamate 5-phosphate into L-glutamate 5-semialdehyde and phosphate. The product spontaneously undergoes cyclization to form 1-pyrroline-5-carboxylate.</text>
</comment>
<comment type="catalytic activity">
    <reaction evidence="1">
        <text>L-glutamate 5-semialdehyde + phosphate + NADP(+) = L-glutamyl 5-phosphate + NADPH + H(+)</text>
        <dbReference type="Rhea" id="RHEA:19541"/>
        <dbReference type="ChEBI" id="CHEBI:15378"/>
        <dbReference type="ChEBI" id="CHEBI:43474"/>
        <dbReference type="ChEBI" id="CHEBI:57783"/>
        <dbReference type="ChEBI" id="CHEBI:58066"/>
        <dbReference type="ChEBI" id="CHEBI:58274"/>
        <dbReference type="ChEBI" id="CHEBI:58349"/>
        <dbReference type="EC" id="1.2.1.41"/>
    </reaction>
</comment>
<comment type="pathway">
    <text evidence="1">Amino-acid biosynthesis; L-proline biosynthesis; L-glutamate 5-semialdehyde from L-glutamate: step 2/2.</text>
</comment>
<comment type="subcellular location">
    <subcellularLocation>
        <location evidence="1">Cytoplasm</location>
    </subcellularLocation>
</comment>
<comment type="similarity">
    <text evidence="1">Belongs to the gamma-glutamyl phosphate reductase family.</text>
</comment>
<comment type="sequence caution" evidence="2">
    <conflict type="erroneous initiation">
        <sequence resource="EMBL-CDS" id="CAK00658"/>
    </conflict>
</comment>
<sequence length="409" mass="44016">MGQKARSAAAALAVASSEQKNNALEMIALSLEAHSDEILRANCLDLEKATQNNLKAAMVDRLKLDELRLAAMIDSVRQVARLSDPVGQIMSAWTRPNGLHISRVRTPLGVIGIIYESRPNVTIDASSLCLKAGNAVILRGGSDSFHSSYALHCALVQGLEHSGLPKSAIQMVGTTDRAAVGEILKGLDGAIDVIVPRGGKSLVARVQSDARVPVFAHLEGLCHIYIDKSADLDMARNIVLNAKLRRTGICGAVETVLIDNEALKKFLPVLTALQEKGCEIRATEDIAFLVPDVKLASEEDWSHEYLDAILSVKTVEGVEGAISHIKRYSSGHTESIIAEDMEVVKKFFNHLDSAILLHNASTQFADGGEFGFGMEIGIATGKMHARGPIGVEQLTSFQYHIKGNGQVRA</sequence>
<organism>
    <name type="scientific">Bartonella tribocorum (strain CIP 105476 / IBS 506)</name>
    <dbReference type="NCBI Taxonomy" id="382640"/>
    <lineage>
        <taxon>Bacteria</taxon>
        <taxon>Pseudomonadati</taxon>
        <taxon>Pseudomonadota</taxon>
        <taxon>Alphaproteobacteria</taxon>
        <taxon>Hyphomicrobiales</taxon>
        <taxon>Bartonellaceae</taxon>
        <taxon>Bartonella</taxon>
    </lineage>
</organism>
<gene>
    <name evidence="1" type="primary">proA</name>
    <name type="ordered locus">BT_0174</name>
</gene>
<dbReference type="EC" id="1.2.1.41" evidence="1"/>
<dbReference type="EMBL" id="AM260525">
    <property type="protein sequence ID" value="CAK00658.1"/>
    <property type="status" value="ALT_INIT"/>
    <property type="molecule type" value="Genomic_DNA"/>
</dbReference>
<dbReference type="RefSeq" id="WP_012230522.1">
    <property type="nucleotide sequence ID" value="NC_010161.1"/>
</dbReference>
<dbReference type="SMR" id="A9IMB2"/>
<dbReference type="KEGG" id="btr:BT_0174"/>
<dbReference type="eggNOG" id="COG0014">
    <property type="taxonomic scope" value="Bacteria"/>
</dbReference>
<dbReference type="HOGENOM" id="CLU_030231_0_0_5"/>
<dbReference type="UniPathway" id="UPA00098">
    <property type="reaction ID" value="UER00360"/>
</dbReference>
<dbReference type="Proteomes" id="UP000001592">
    <property type="component" value="Chromosome"/>
</dbReference>
<dbReference type="GO" id="GO:0005737">
    <property type="term" value="C:cytoplasm"/>
    <property type="evidence" value="ECO:0007669"/>
    <property type="project" value="UniProtKB-SubCell"/>
</dbReference>
<dbReference type="GO" id="GO:0004350">
    <property type="term" value="F:glutamate-5-semialdehyde dehydrogenase activity"/>
    <property type="evidence" value="ECO:0007669"/>
    <property type="project" value="UniProtKB-UniRule"/>
</dbReference>
<dbReference type="GO" id="GO:0050661">
    <property type="term" value="F:NADP binding"/>
    <property type="evidence" value="ECO:0007669"/>
    <property type="project" value="InterPro"/>
</dbReference>
<dbReference type="GO" id="GO:0055129">
    <property type="term" value="P:L-proline biosynthetic process"/>
    <property type="evidence" value="ECO:0007669"/>
    <property type="project" value="UniProtKB-UniRule"/>
</dbReference>
<dbReference type="CDD" id="cd07079">
    <property type="entry name" value="ALDH_F18-19_ProA-GPR"/>
    <property type="match status" value="1"/>
</dbReference>
<dbReference type="Gene3D" id="3.40.605.10">
    <property type="entry name" value="Aldehyde Dehydrogenase, Chain A, domain 1"/>
    <property type="match status" value="1"/>
</dbReference>
<dbReference type="Gene3D" id="3.40.309.10">
    <property type="entry name" value="Aldehyde Dehydrogenase, Chain A, domain 2"/>
    <property type="match status" value="1"/>
</dbReference>
<dbReference type="HAMAP" id="MF_00412">
    <property type="entry name" value="ProA"/>
    <property type="match status" value="1"/>
</dbReference>
<dbReference type="InterPro" id="IPR016161">
    <property type="entry name" value="Ald_DH/histidinol_DH"/>
</dbReference>
<dbReference type="InterPro" id="IPR016163">
    <property type="entry name" value="Ald_DH_C"/>
</dbReference>
<dbReference type="InterPro" id="IPR016162">
    <property type="entry name" value="Ald_DH_N"/>
</dbReference>
<dbReference type="InterPro" id="IPR015590">
    <property type="entry name" value="Aldehyde_DH_dom"/>
</dbReference>
<dbReference type="InterPro" id="IPR020593">
    <property type="entry name" value="G-glutamylP_reductase_CS"/>
</dbReference>
<dbReference type="InterPro" id="IPR012134">
    <property type="entry name" value="Glu-5-SA_DH"/>
</dbReference>
<dbReference type="InterPro" id="IPR000965">
    <property type="entry name" value="GPR_dom"/>
</dbReference>
<dbReference type="NCBIfam" id="NF001221">
    <property type="entry name" value="PRK00197.1"/>
    <property type="match status" value="1"/>
</dbReference>
<dbReference type="NCBIfam" id="TIGR00407">
    <property type="entry name" value="proA"/>
    <property type="match status" value="1"/>
</dbReference>
<dbReference type="PANTHER" id="PTHR11063:SF8">
    <property type="entry name" value="DELTA-1-PYRROLINE-5-CARBOXYLATE SYNTHASE"/>
    <property type="match status" value="1"/>
</dbReference>
<dbReference type="PANTHER" id="PTHR11063">
    <property type="entry name" value="GLUTAMATE SEMIALDEHYDE DEHYDROGENASE"/>
    <property type="match status" value="1"/>
</dbReference>
<dbReference type="Pfam" id="PF00171">
    <property type="entry name" value="Aldedh"/>
    <property type="match status" value="1"/>
</dbReference>
<dbReference type="PIRSF" id="PIRSF000151">
    <property type="entry name" value="GPR"/>
    <property type="match status" value="1"/>
</dbReference>
<dbReference type="SUPFAM" id="SSF53720">
    <property type="entry name" value="ALDH-like"/>
    <property type="match status" value="1"/>
</dbReference>
<dbReference type="PROSITE" id="PS01223">
    <property type="entry name" value="PROA"/>
    <property type="match status" value="1"/>
</dbReference>
<reference key="1">
    <citation type="journal article" date="2007" name="Nat. Genet.">
        <title>Genomic analysis of Bartonella identifies type IV secretion systems as host adaptability factors.</title>
        <authorList>
            <person name="Saenz H.L."/>
            <person name="Engel P."/>
            <person name="Stoeckli M.C."/>
            <person name="Lanz C."/>
            <person name="Raddatz G."/>
            <person name="Vayssier-Taussat M."/>
            <person name="Birtles R."/>
            <person name="Schuster S.C."/>
            <person name="Dehio C."/>
        </authorList>
    </citation>
    <scope>NUCLEOTIDE SEQUENCE [LARGE SCALE GENOMIC DNA]</scope>
    <source>
        <strain>CIP 105476 / IBS 506</strain>
    </source>
</reference>
<accession>A9IMB2</accession>
<feature type="chain" id="PRO_0000340872" description="Gamma-glutamyl phosphate reductase">
    <location>
        <begin position="1"/>
        <end position="409"/>
    </location>
</feature>
<evidence type="ECO:0000255" key="1">
    <source>
        <dbReference type="HAMAP-Rule" id="MF_00412"/>
    </source>
</evidence>
<evidence type="ECO:0000305" key="2"/>
<keyword id="KW-0028">Amino-acid biosynthesis</keyword>
<keyword id="KW-0963">Cytoplasm</keyword>
<keyword id="KW-0521">NADP</keyword>
<keyword id="KW-0560">Oxidoreductase</keyword>
<keyword id="KW-0641">Proline biosynthesis</keyword>
<protein>
    <recommendedName>
        <fullName evidence="1">Gamma-glutamyl phosphate reductase</fullName>
        <shortName evidence="1">GPR</shortName>
        <ecNumber evidence="1">1.2.1.41</ecNumber>
    </recommendedName>
    <alternativeName>
        <fullName evidence="1">Glutamate-5-semialdehyde dehydrogenase</fullName>
    </alternativeName>
    <alternativeName>
        <fullName evidence="1">Glutamyl-gamma-semialdehyde dehydrogenase</fullName>
        <shortName evidence="1">GSA dehydrogenase</shortName>
    </alternativeName>
</protein>